<reference key="1">
    <citation type="journal article" date="2005" name="J. Virol.">
        <title>Characterization of the Tupaia rhabdovirus genome reveals a long open reading frame overlapping with P and a novel gene encoding a small hydrophobic protein.</title>
        <authorList>
            <person name="Springfeld C."/>
            <person name="Darai G."/>
            <person name="Cattaneo R."/>
        </authorList>
    </citation>
    <scope>NUCLEOTIDE SEQUENCE [GENOMIC RNA]</scope>
</reference>
<comment type="function">
    <text evidence="1">Encapsidates the genome, protecting it from nucleases. The encapsidated genomic RNA is termed the NC and serves as template for transcription and replication. Nucleocapsid assembly is concomitant with replication, therefore viral replication depends on the intracellular concentration of free N, termed N(0). All replicative products are resistant to nucleases.</text>
</comment>
<comment type="subunit">
    <text evidence="1">Homomultimerizes to form the nucleocapsid. Binds to viral genomic RNA. N in nucleocapsid binds the P protein and thereby positions the polymerase on the template. Interaction of N(0) with the P protein prevents the uncontrolled aggregation of N(0).</text>
</comment>
<comment type="subcellular location">
    <subcellularLocation>
        <location>Virion</location>
    </subcellularLocation>
    <subcellularLocation>
        <location>Host cytoplasm</location>
    </subcellularLocation>
    <text evidence="1">The nucleocapsid is synthesized in the cytoplasm, and is subsequently transported via microtubules to the cell periphery.</text>
</comment>
<feature type="chain" id="PRO_0000432065" description="Nucleoprotein">
    <location>
        <begin position="1"/>
        <end position="430"/>
    </location>
</feature>
<feature type="region of interest" description="Disordered" evidence="2">
    <location>
        <begin position="1"/>
        <end position="48"/>
    </location>
</feature>
<feature type="compositionally biased region" description="Polar residues" evidence="2">
    <location>
        <begin position="1"/>
        <end position="17"/>
    </location>
</feature>
<feature type="compositionally biased region" description="Polar residues" evidence="2">
    <location>
        <begin position="39"/>
        <end position="48"/>
    </location>
</feature>
<name>NCAP_TUPVT</name>
<organismHost>
    <name type="scientific">Tupaia</name>
    <dbReference type="NCBI Taxonomy" id="9394"/>
</organismHost>
<protein>
    <recommendedName>
        <fullName>Nucleoprotein</fullName>
        <shortName>NP</shortName>
    </recommendedName>
    <alternativeName>
        <fullName>Nucleocapsid protein</fullName>
        <shortName>Protein N</shortName>
    </alternativeName>
</protein>
<gene>
    <name type="primary">N</name>
</gene>
<organism>
    <name type="scientific">Tupaia virus (isolate Tupaia/Thailand/-/1986)</name>
    <name type="common">TUPV</name>
    <dbReference type="NCBI Taxonomy" id="1560034"/>
    <lineage>
        <taxon>Viruses</taxon>
        <taxon>Riboviria</taxon>
        <taxon>Orthornavirae</taxon>
        <taxon>Negarnaviricota</taxon>
        <taxon>Haploviricotina</taxon>
        <taxon>Monjiviricetes</taxon>
        <taxon>Mononegavirales</taxon>
        <taxon>Rhabdoviridae</taxon>
        <taxon>Alpharhabdovirinae</taxon>
        <taxon>Tupavirus</taxon>
        <taxon>Tupavirus tupaia</taxon>
    </lineage>
</organism>
<keyword id="KW-0167">Capsid protein</keyword>
<keyword id="KW-1139">Helical capsid protein</keyword>
<keyword id="KW-1035">Host cytoplasm</keyword>
<keyword id="KW-1185">Reference proteome</keyword>
<keyword id="KW-0687">Ribonucleoprotein</keyword>
<keyword id="KW-0694">RNA-binding</keyword>
<keyword id="KW-0543">Viral nucleoprotein</keyword>
<keyword id="KW-0693">Viral RNA replication</keyword>
<keyword id="KW-0946">Virion</keyword>
<dbReference type="EMBL" id="AY840978">
    <property type="protein sequence ID" value="AAX47596.1"/>
    <property type="molecule type" value="Genomic_RNA"/>
</dbReference>
<dbReference type="RefSeq" id="YP_238528.1">
    <property type="nucleotide sequence ID" value="NC_007020.1"/>
</dbReference>
<dbReference type="SMR" id="Q4VKV8"/>
<dbReference type="GeneID" id="3416610"/>
<dbReference type="KEGG" id="vg:3416610"/>
<dbReference type="Proteomes" id="UP000029771">
    <property type="component" value="Segment"/>
</dbReference>
<dbReference type="GO" id="GO:0019029">
    <property type="term" value="C:helical viral capsid"/>
    <property type="evidence" value="ECO:0007669"/>
    <property type="project" value="UniProtKB-KW"/>
</dbReference>
<dbReference type="GO" id="GO:0030430">
    <property type="term" value="C:host cell cytoplasm"/>
    <property type="evidence" value="ECO:0007669"/>
    <property type="project" value="UniProtKB-SubCell"/>
</dbReference>
<dbReference type="GO" id="GO:1990904">
    <property type="term" value="C:ribonucleoprotein complex"/>
    <property type="evidence" value="ECO:0007669"/>
    <property type="project" value="UniProtKB-KW"/>
</dbReference>
<dbReference type="GO" id="GO:0019013">
    <property type="term" value="C:viral nucleocapsid"/>
    <property type="evidence" value="ECO:0007669"/>
    <property type="project" value="UniProtKB-KW"/>
</dbReference>
<dbReference type="GO" id="GO:0003723">
    <property type="term" value="F:RNA binding"/>
    <property type="evidence" value="ECO:0007669"/>
    <property type="project" value="UniProtKB-KW"/>
</dbReference>
<dbReference type="Gene3D" id="1.10.3610.10">
    <property type="entry name" value="Nucleoprotein"/>
    <property type="match status" value="1"/>
</dbReference>
<dbReference type="Gene3D" id="1.10.3570.10">
    <property type="entry name" value="Rhabdovirus nucleocapsid protein like domain"/>
    <property type="match status" value="1"/>
</dbReference>
<dbReference type="InterPro" id="IPR000448">
    <property type="entry name" value="Rhabdo_ncapsid"/>
</dbReference>
<dbReference type="InterPro" id="IPR023331">
    <property type="entry name" value="Rhabdovirus_ncapsid_C"/>
</dbReference>
<dbReference type="InterPro" id="IPR023330">
    <property type="entry name" value="Rhabdovirus_ncapsid_N"/>
</dbReference>
<dbReference type="InterPro" id="IPR035961">
    <property type="entry name" value="Rhabdovirus_nucleoprotein-like"/>
</dbReference>
<dbReference type="Pfam" id="PF00945">
    <property type="entry name" value="Rhabdo_ncap"/>
    <property type="match status" value="1"/>
</dbReference>
<dbReference type="SUPFAM" id="SSF140809">
    <property type="entry name" value="Rhabdovirus nucleoprotein-like"/>
    <property type="match status" value="1"/>
</dbReference>
<evidence type="ECO:0000250" key="1">
    <source>
        <dbReference type="UniProtKB" id="P03521"/>
    </source>
</evidence>
<evidence type="ECO:0000256" key="2">
    <source>
        <dbReference type="SAM" id="MobiDB-lite"/>
    </source>
</evidence>
<sequence length="430" mass="49107">MSLSRLYSKKTQSSYNATAPLDRDPPEYPGDAFKKSRNKPTLTRPKSNLSLDDARCMIKGQIQNGSVDIELAKHYLILVLEQITEDNSDDWTSFGVQILSRTERGRPLCMVNIQLDDKDKTFDSQVKDSTATVEDDLWMTTYLLAIYRIGRATNKNYQTQLIDELNKLLATFPGDYVPMVQALQAFDSWPNDPNYCKLVACVDMFFSRFKKSKWAILRFGTISSRYRDCAALTALNHFSRLLGVDLVDALEWSFVGRVSDEIEQMLKPDQELDKVDSYTPYMIDLGISKASPYSTVRNPAWHLFCHTVGSLMMSRRSINARHLEAPDQSNILSNAELIVFVFETRIKWLKNFRKLDSVDASDQLDQVAPVVLGTKDLPNTTNADDWFSWMKLNNFELPDECGRYVSKLAKKLKDSREGSVGQFVYLRLGD</sequence>
<proteinExistence type="inferred from homology"/>
<accession>Q4VKV8</accession>